<sequence>MVIIGTVPAGLAGVLFKDFFESLFSSLTAVGFFLLVTGFLLWGSENISRRVREKLPVEKLGVRESLIIGCAQALAIAPGISRSGATISAGLFLGFERELAARYSFLLSIPAILGAALIQIKDIGAGMNLLGASMVAGFAAAAVSGYIAIKFLLKLIKERDLYIFAYYCWALGIMILAAALI</sequence>
<accession>O27479</accession>
<organism>
    <name type="scientific">Methanothermobacter thermautotrophicus (strain ATCC 29096 / DSM 1053 / JCM 10044 / NBRC 100330 / Delta H)</name>
    <name type="common">Methanobacterium thermoautotrophicum</name>
    <dbReference type="NCBI Taxonomy" id="187420"/>
    <lineage>
        <taxon>Archaea</taxon>
        <taxon>Methanobacteriati</taxon>
        <taxon>Methanobacteriota</taxon>
        <taxon>Methanomada group</taxon>
        <taxon>Methanobacteria</taxon>
        <taxon>Methanobacteriales</taxon>
        <taxon>Methanobacteriaceae</taxon>
        <taxon>Methanothermobacter</taxon>
    </lineage>
</organism>
<keyword id="KW-1003">Cell membrane</keyword>
<keyword id="KW-0378">Hydrolase</keyword>
<keyword id="KW-0472">Membrane</keyword>
<keyword id="KW-1185">Reference proteome</keyword>
<keyword id="KW-0812">Transmembrane</keyword>
<keyword id="KW-1133">Transmembrane helix</keyword>
<reference key="1">
    <citation type="journal article" date="1997" name="J. Bacteriol.">
        <title>Complete genome sequence of Methanobacterium thermoautotrophicum deltaH: functional analysis and comparative genomics.</title>
        <authorList>
            <person name="Smith D.R."/>
            <person name="Doucette-Stamm L.A."/>
            <person name="Deloughery C."/>
            <person name="Lee H.-M."/>
            <person name="Dubois J."/>
            <person name="Aldredge T."/>
            <person name="Bashirzadeh R."/>
            <person name="Blakely D."/>
            <person name="Cook R."/>
            <person name="Gilbert K."/>
            <person name="Harrison D."/>
            <person name="Hoang L."/>
            <person name="Keagle P."/>
            <person name="Lumm W."/>
            <person name="Pothier B."/>
            <person name="Qiu D."/>
            <person name="Spadafora R."/>
            <person name="Vicare R."/>
            <person name="Wang Y."/>
            <person name="Wierzbowski J."/>
            <person name="Gibson R."/>
            <person name="Jiwani N."/>
            <person name="Caruso A."/>
            <person name="Bush D."/>
            <person name="Safer H."/>
            <person name="Patwell D."/>
            <person name="Prabhakar S."/>
            <person name="McDougall S."/>
            <person name="Shimer G."/>
            <person name="Goyal A."/>
            <person name="Pietrovski S."/>
            <person name="Church G.M."/>
            <person name="Daniels C.J."/>
            <person name="Mao J.-I."/>
            <person name="Rice P."/>
            <person name="Noelling J."/>
            <person name="Reeve J.N."/>
        </authorList>
    </citation>
    <scope>NUCLEOTIDE SEQUENCE [LARGE SCALE GENOMIC DNA]</scope>
    <source>
        <strain>ATCC 29096 / DSM 1053 / JCM 10044 / NBRC 100330 / Delta H</strain>
    </source>
</reference>
<dbReference type="EC" id="3.6.1.27"/>
<dbReference type="EMBL" id="AE000666">
    <property type="protein sequence ID" value="AAB85905.1"/>
    <property type="molecule type" value="Genomic_DNA"/>
</dbReference>
<dbReference type="PIR" id="C69057">
    <property type="entry name" value="C69057"/>
</dbReference>
<dbReference type="SMR" id="O27479"/>
<dbReference type="STRING" id="187420.MTH_1428"/>
<dbReference type="PaxDb" id="187420-MTH_1428"/>
<dbReference type="EnsemblBacteria" id="AAB85905">
    <property type="protein sequence ID" value="AAB85905"/>
    <property type="gene ID" value="MTH_1428"/>
</dbReference>
<dbReference type="KEGG" id="mth:MTH_1428"/>
<dbReference type="PATRIC" id="fig|187420.15.peg.1392"/>
<dbReference type="HOGENOM" id="CLU_060296_4_1_2"/>
<dbReference type="InParanoid" id="O27479"/>
<dbReference type="Proteomes" id="UP000005223">
    <property type="component" value="Chromosome"/>
</dbReference>
<dbReference type="GO" id="GO:0005886">
    <property type="term" value="C:plasma membrane"/>
    <property type="evidence" value="ECO:0007669"/>
    <property type="project" value="UniProtKB-SubCell"/>
</dbReference>
<dbReference type="GO" id="GO:0050380">
    <property type="term" value="F:undecaprenyl-diphosphatase activity"/>
    <property type="evidence" value="ECO:0007669"/>
    <property type="project" value="UniProtKB-EC"/>
</dbReference>
<dbReference type="InterPro" id="IPR003824">
    <property type="entry name" value="UppP"/>
</dbReference>
<dbReference type="PANTHER" id="PTHR30622">
    <property type="entry name" value="UNDECAPRENYL-DIPHOSPHATASE"/>
    <property type="match status" value="1"/>
</dbReference>
<dbReference type="PANTHER" id="PTHR30622:SF2">
    <property type="entry name" value="UNDECAPRENYL-DIPHOSPHATASE"/>
    <property type="match status" value="1"/>
</dbReference>
<dbReference type="Pfam" id="PF02673">
    <property type="entry name" value="BacA"/>
    <property type="match status" value="1"/>
</dbReference>
<comment type="function">
    <text evidence="1">Catalyzes the dephosphorylation of undecaprenyl diphosphate (UPP).</text>
</comment>
<comment type="catalytic activity">
    <reaction>
        <text>di-trans,octa-cis-undecaprenyl diphosphate + H2O = di-trans,octa-cis-undecaprenyl phosphate + phosphate + H(+)</text>
        <dbReference type="Rhea" id="RHEA:28094"/>
        <dbReference type="ChEBI" id="CHEBI:15377"/>
        <dbReference type="ChEBI" id="CHEBI:15378"/>
        <dbReference type="ChEBI" id="CHEBI:43474"/>
        <dbReference type="ChEBI" id="CHEBI:58405"/>
        <dbReference type="ChEBI" id="CHEBI:60392"/>
        <dbReference type="EC" id="3.6.1.27"/>
    </reaction>
</comment>
<comment type="subcellular location">
    <subcellularLocation>
        <location evidence="1">Cell membrane</location>
        <topology evidence="1">Multi-pass membrane protein</topology>
    </subcellularLocation>
</comment>
<comment type="similarity">
    <text evidence="3">Belongs to the UppP family.</text>
</comment>
<proteinExistence type="inferred from homology"/>
<gene>
    <name type="primary">uppP</name>
    <name type="synonym">bacA</name>
    <name type="synonym">upk</name>
    <name type="ordered locus">MTH_1428</name>
</gene>
<evidence type="ECO:0000250" key="1"/>
<evidence type="ECO:0000255" key="2"/>
<evidence type="ECO:0000305" key="3"/>
<feature type="chain" id="PRO_0000151252" description="Undecaprenyl-diphosphatase">
    <location>
        <begin position="1"/>
        <end position="181"/>
    </location>
</feature>
<feature type="transmembrane region" description="Helical" evidence="2">
    <location>
        <begin position="23"/>
        <end position="43"/>
    </location>
</feature>
<feature type="transmembrane region" description="Helical" evidence="2">
    <location>
        <begin position="105"/>
        <end position="125"/>
    </location>
</feature>
<feature type="transmembrane region" description="Helical" evidence="2">
    <location>
        <begin position="129"/>
        <end position="149"/>
    </location>
</feature>
<feature type="transmembrane region" description="Helical" evidence="2">
    <location>
        <begin position="161"/>
        <end position="181"/>
    </location>
</feature>
<name>UPPP_METTH</name>
<protein>
    <recommendedName>
        <fullName>Undecaprenyl-diphosphatase</fullName>
        <ecNumber>3.6.1.27</ecNumber>
    </recommendedName>
    <alternativeName>
        <fullName>Undecaprenyl pyrophosphate phosphatase</fullName>
    </alternativeName>
</protein>